<evidence type="ECO:0000250" key="1">
    <source>
        <dbReference type="UniProtKB" id="Q96DI7"/>
    </source>
</evidence>
<evidence type="ECO:0000305" key="2"/>
<evidence type="ECO:0007744" key="3">
    <source>
    </source>
</evidence>
<protein>
    <recommendedName>
        <fullName>U5 small nuclear ribonucleoprotein 40 kDa protein</fullName>
        <shortName>U5 snRNP 40 kDa protein</shortName>
    </recommendedName>
    <alternativeName>
        <fullName>WD repeat-containing protein 57</fullName>
    </alternativeName>
</protein>
<reference key="1">
    <citation type="journal article" date="2005" name="Science">
        <title>The transcriptional landscape of the mammalian genome.</title>
        <authorList>
            <person name="Carninci P."/>
            <person name="Kasukawa T."/>
            <person name="Katayama S."/>
            <person name="Gough J."/>
            <person name="Frith M.C."/>
            <person name="Maeda N."/>
            <person name="Oyama R."/>
            <person name="Ravasi T."/>
            <person name="Lenhard B."/>
            <person name="Wells C."/>
            <person name="Kodzius R."/>
            <person name="Shimokawa K."/>
            <person name="Bajic V.B."/>
            <person name="Brenner S.E."/>
            <person name="Batalov S."/>
            <person name="Forrest A.R."/>
            <person name="Zavolan M."/>
            <person name="Davis M.J."/>
            <person name="Wilming L.G."/>
            <person name="Aidinis V."/>
            <person name="Allen J.E."/>
            <person name="Ambesi-Impiombato A."/>
            <person name="Apweiler R."/>
            <person name="Aturaliya R.N."/>
            <person name="Bailey T.L."/>
            <person name="Bansal M."/>
            <person name="Baxter L."/>
            <person name="Beisel K.W."/>
            <person name="Bersano T."/>
            <person name="Bono H."/>
            <person name="Chalk A.M."/>
            <person name="Chiu K.P."/>
            <person name="Choudhary V."/>
            <person name="Christoffels A."/>
            <person name="Clutterbuck D.R."/>
            <person name="Crowe M.L."/>
            <person name="Dalla E."/>
            <person name="Dalrymple B.P."/>
            <person name="de Bono B."/>
            <person name="Della Gatta G."/>
            <person name="di Bernardo D."/>
            <person name="Down T."/>
            <person name="Engstrom P."/>
            <person name="Fagiolini M."/>
            <person name="Faulkner G."/>
            <person name="Fletcher C.F."/>
            <person name="Fukushima T."/>
            <person name="Furuno M."/>
            <person name="Futaki S."/>
            <person name="Gariboldi M."/>
            <person name="Georgii-Hemming P."/>
            <person name="Gingeras T.R."/>
            <person name="Gojobori T."/>
            <person name="Green R.E."/>
            <person name="Gustincich S."/>
            <person name="Harbers M."/>
            <person name="Hayashi Y."/>
            <person name="Hensch T.K."/>
            <person name="Hirokawa N."/>
            <person name="Hill D."/>
            <person name="Huminiecki L."/>
            <person name="Iacono M."/>
            <person name="Ikeo K."/>
            <person name="Iwama A."/>
            <person name="Ishikawa T."/>
            <person name="Jakt M."/>
            <person name="Kanapin A."/>
            <person name="Katoh M."/>
            <person name="Kawasawa Y."/>
            <person name="Kelso J."/>
            <person name="Kitamura H."/>
            <person name="Kitano H."/>
            <person name="Kollias G."/>
            <person name="Krishnan S.P."/>
            <person name="Kruger A."/>
            <person name="Kummerfeld S.K."/>
            <person name="Kurochkin I.V."/>
            <person name="Lareau L.F."/>
            <person name="Lazarevic D."/>
            <person name="Lipovich L."/>
            <person name="Liu J."/>
            <person name="Liuni S."/>
            <person name="McWilliam S."/>
            <person name="Madan Babu M."/>
            <person name="Madera M."/>
            <person name="Marchionni L."/>
            <person name="Matsuda H."/>
            <person name="Matsuzawa S."/>
            <person name="Miki H."/>
            <person name="Mignone F."/>
            <person name="Miyake S."/>
            <person name="Morris K."/>
            <person name="Mottagui-Tabar S."/>
            <person name="Mulder N."/>
            <person name="Nakano N."/>
            <person name="Nakauchi H."/>
            <person name="Ng P."/>
            <person name="Nilsson R."/>
            <person name="Nishiguchi S."/>
            <person name="Nishikawa S."/>
            <person name="Nori F."/>
            <person name="Ohara O."/>
            <person name="Okazaki Y."/>
            <person name="Orlando V."/>
            <person name="Pang K.C."/>
            <person name="Pavan W.J."/>
            <person name="Pavesi G."/>
            <person name="Pesole G."/>
            <person name="Petrovsky N."/>
            <person name="Piazza S."/>
            <person name="Reed J."/>
            <person name="Reid J.F."/>
            <person name="Ring B.Z."/>
            <person name="Ringwald M."/>
            <person name="Rost B."/>
            <person name="Ruan Y."/>
            <person name="Salzberg S.L."/>
            <person name="Sandelin A."/>
            <person name="Schneider C."/>
            <person name="Schoenbach C."/>
            <person name="Sekiguchi K."/>
            <person name="Semple C.A."/>
            <person name="Seno S."/>
            <person name="Sessa L."/>
            <person name="Sheng Y."/>
            <person name="Shibata Y."/>
            <person name="Shimada H."/>
            <person name="Shimada K."/>
            <person name="Silva D."/>
            <person name="Sinclair B."/>
            <person name="Sperling S."/>
            <person name="Stupka E."/>
            <person name="Sugiura K."/>
            <person name="Sultana R."/>
            <person name="Takenaka Y."/>
            <person name="Taki K."/>
            <person name="Tammoja K."/>
            <person name="Tan S.L."/>
            <person name="Tang S."/>
            <person name="Taylor M.S."/>
            <person name="Tegner J."/>
            <person name="Teichmann S.A."/>
            <person name="Ueda H.R."/>
            <person name="van Nimwegen E."/>
            <person name="Verardo R."/>
            <person name="Wei C.L."/>
            <person name="Yagi K."/>
            <person name="Yamanishi H."/>
            <person name="Zabarovsky E."/>
            <person name="Zhu S."/>
            <person name="Zimmer A."/>
            <person name="Hide W."/>
            <person name="Bult C."/>
            <person name="Grimmond S.M."/>
            <person name="Teasdale R.D."/>
            <person name="Liu E.T."/>
            <person name="Brusic V."/>
            <person name="Quackenbush J."/>
            <person name="Wahlestedt C."/>
            <person name="Mattick J.S."/>
            <person name="Hume D.A."/>
            <person name="Kai C."/>
            <person name="Sasaki D."/>
            <person name="Tomaru Y."/>
            <person name="Fukuda S."/>
            <person name="Kanamori-Katayama M."/>
            <person name="Suzuki M."/>
            <person name="Aoki J."/>
            <person name="Arakawa T."/>
            <person name="Iida J."/>
            <person name="Imamura K."/>
            <person name="Itoh M."/>
            <person name="Kato T."/>
            <person name="Kawaji H."/>
            <person name="Kawagashira N."/>
            <person name="Kawashima T."/>
            <person name="Kojima M."/>
            <person name="Kondo S."/>
            <person name="Konno H."/>
            <person name="Nakano K."/>
            <person name="Ninomiya N."/>
            <person name="Nishio T."/>
            <person name="Okada M."/>
            <person name="Plessy C."/>
            <person name="Shibata K."/>
            <person name="Shiraki T."/>
            <person name="Suzuki S."/>
            <person name="Tagami M."/>
            <person name="Waki K."/>
            <person name="Watahiki A."/>
            <person name="Okamura-Oho Y."/>
            <person name="Suzuki H."/>
            <person name="Kawai J."/>
            <person name="Hayashizaki Y."/>
        </authorList>
    </citation>
    <scope>NUCLEOTIDE SEQUENCE [LARGE SCALE MRNA]</scope>
    <source>
        <strain>C57BL/6J</strain>
        <strain>NOD</strain>
        <tissue>Kidney</tissue>
        <tissue>Thymus</tissue>
    </source>
</reference>
<reference key="2">
    <citation type="journal article" date="2004" name="Genome Res.">
        <title>The status, quality, and expansion of the NIH full-length cDNA project: the Mammalian Gene Collection (MGC).</title>
        <authorList>
            <consortium name="The MGC Project Team"/>
        </authorList>
    </citation>
    <scope>NUCLEOTIDE SEQUENCE [LARGE SCALE MRNA]</scope>
    <source>
        <strain>C57BL/6J</strain>
    </source>
</reference>
<reference key="3">
    <citation type="journal article" date="2010" name="Cell">
        <title>A tissue-specific atlas of mouse protein phosphorylation and expression.</title>
        <authorList>
            <person name="Huttlin E.L."/>
            <person name="Jedrychowski M.P."/>
            <person name="Elias J.E."/>
            <person name="Goswami T."/>
            <person name="Rad R."/>
            <person name="Beausoleil S.A."/>
            <person name="Villen J."/>
            <person name="Haas W."/>
            <person name="Sowa M.E."/>
            <person name="Gygi S.P."/>
        </authorList>
    </citation>
    <scope>IDENTIFICATION BY MASS SPECTROMETRY [LARGE SCALE ANALYSIS]</scope>
    <source>
        <tissue>Spleen</tissue>
        <tissue>Testis</tissue>
    </source>
</reference>
<reference key="4">
    <citation type="journal article" date="2014" name="Mol. Cell. Proteomics">
        <title>Immunoaffinity enrichment and mass spectrometry analysis of protein methylation.</title>
        <authorList>
            <person name="Guo A."/>
            <person name="Gu H."/>
            <person name="Zhou J."/>
            <person name="Mulhern D."/>
            <person name="Wang Y."/>
            <person name="Lee K.A."/>
            <person name="Yang V."/>
            <person name="Aguiar M."/>
            <person name="Kornhauser J."/>
            <person name="Jia X."/>
            <person name="Ren J."/>
            <person name="Beausoleil S.A."/>
            <person name="Silva J.C."/>
            <person name="Vemulapalli V."/>
            <person name="Bedford M.T."/>
            <person name="Comb M.J."/>
        </authorList>
    </citation>
    <scope>METHYLATION [LARGE SCALE ANALYSIS] AT ARG-21</scope>
    <scope>IDENTIFICATION BY MASS SPECTROMETRY [LARGE SCALE ANALYSIS]</scope>
    <source>
        <tissue>Brain</tissue>
        <tissue>Embryo</tissue>
    </source>
</reference>
<keyword id="KW-1017">Isopeptide bond</keyword>
<keyword id="KW-0488">Methylation</keyword>
<keyword id="KW-0507">mRNA processing</keyword>
<keyword id="KW-0508">mRNA splicing</keyword>
<keyword id="KW-0539">Nucleus</keyword>
<keyword id="KW-1185">Reference proteome</keyword>
<keyword id="KW-0677">Repeat</keyword>
<keyword id="KW-0747">Spliceosome</keyword>
<keyword id="KW-0832">Ubl conjugation</keyword>
<keyword id="KW-0853">WD repeat</keyword>
<gene>
    <name type="primary">Snrnp40</name>
    <name type="synonym">Wdr57</name>
</gene>
<proteinExistence type="evidence at protein level"/>
<sequence>MIEQQKRKGPELPLVPVKRPRHELLLGAAGAGPGAGPQQATPGALLQAGPPRCSSLQAPIMLLSGHEGEVYCCKFHPNGSTLASAGFDRLILLWNVYGDCDNYATLKGHSGAVMELHYNTDGSMLFSASTDKTVAVWDSETGERVKRLKGHTSFVNSCYPARRGPQLVCTGSDDGTVKLWDIRKKAAVQTFQNTYQVLAVTFNDTSDQIISGGIDNDIKVWDLRQNKLTYTMRGHADSVTGLSLSSEGSYLLSNAMDNTVRVWDVRPFAPKERCVKIFQGNVHNFEKNLLRCSWSPDGSKIAAGSADRFVYVWDTTSRRVLYKLPGHAGSINEVAFHPDEPIILSASSDKRLYMGEIQ</sequence>
<name>SNR40_MOUSE</name>
<dbReference type="EMBL" id="AK002371">
    <property type="protein sequence ID" value="BAB22049.1"/>
    <property type="status" value="ALT_FRAME"/>
    <property type="molecule type" value="mRNA"/>
</dbReference>
<dbReference type="EMBL" id="AK169605">
    <property type="protein sequence ID" value="BAE41255.1"/>
    <property type="molecule type" value="mRNA"/>
</dbReference>
<dbReference type="EMBL" id="BC058365">
    <property type="protein sequence ID" value="AAH58365.1"/>
    <property type="molecule type" value="mRNA"/>
</dbReference>
<dbReference type="CCDS" id="CCDS38892.1"/>
<dbReference type="RefSeq" id="NP_079921.2">
    <property type="nucleotide sequence ID" value="NM_025645.2"/>
</dbReference>
<dbReference type="SMR" id="Q6PE01"/>
<dbReference type="BioGRID" id="211571">
    <property type="interactions" value="18"/>
</dbReference>
<dbReference type="FunCoup" id="Q6PE01">
    <property type="interactions" value="4389"/>
</dbReference>
<dbReference type="IntAct" id="Q6PE01">
    <property type="interactions" value="2"/>
</dbReference>
<dbReference type="MINT" id="Q6PE01"/>
<dbReference type="STRING" id="10090.ENSMUSP00000101616"/>
<dbReference type="GlyGen" id="Q6PE01">
    <property type="glycosylation" value="2 sites, 1 N-linked glycan (1 site)"/>
</dbReference>
<dbReference type="iPTMnet" id="Q6PE01"/>
<dbReference type="PhosphoSitePlus" id="Q6PE01"/>
<dbReference type="SwissPalm" id="Q6PE01"/>
<dbReference type="jPOST" id="Q6PE01"/>
<dbReference type="PaxDb" id="10090-ENSMUSP00000101616"/>
<dbReference type="PeptideAtlas" id="Q6PE01"/>
<dbReference type="ProteomicsDB" id="257279"/>
<dbReference type="Pumba" id="Q6PE01"/>
<dbReference type="Antibodypedia" id="16742">
    <property type="antibodies" value="128 antibodies from 19 providers"/>
</dbReference>
<dbReference type="DNASU" id="66585"/>
<dbReference type="Ensembl" id="ENSMUST00000105994.4">
    <property type="protein sequence ID" value="ENSMUSP00000101616.4"/>
    <property type="gene ID" value="ENSMUSG00000074088.7"/>
</dbReference>
<dbReference type="GeneID" id="66585"/>
<dbReference type="KEGG" id="mmu:66585"/>
<dbReference type="UCSC" id="uc008uzf.1">
    <property type="organism name" value="mouse"/>
</dbReference>
<dbReference type="AGR" id="MGI:1913835"/>
<dbReference type="CTD" id="9410"/>
<dbReference type="MGI" id="MGI:1913835">
    <property type="gene designation" value="Snrnp40"/>
</dbReference>
<dbReference type="VEuPathDB" id="HostDB:ENSMUSG00000074088"/>
<dbReference type="eggNOG" id="KOG0265">
    <property type="taxonomic scope" value="Eukaryota"/>
</dbReference>
<dbReference type="GeneTree" id="ENSGT00940000155058"/>
<dbReference type="HOGENOM" id="CLU_000288_57_2_1"/>
<dbReference type="InParanoid" id="Q6PE01"/>
<dbReference type="OMA" id="IWDIRPY"/>
<dbReference type="OrthoDB" id="1068471at2759"/>
<dbReference type="PhylomeDB" id="Q6PE01"/>
<dbReference type="TreeFam" id="TF300039"/>
<dbReference type="Reactome" id="R-MMU-72163">
    <property type="pathway name" value="mRNA Splicing - Major Pathway"/>
</dbReference>
<dbReference type="Reactome" id="R-MMU-72165">
    <property type="pathway name" value="mRNA Splicing - Minor Pathway"/>
</dbReference>
<dbReference type="BioGRID-ORCS" id="66585">
    <property type="hits" value="29 hits in 78 CRISPR screens"/>
</dbReference>
<dbReference type="ChiTaRS" id="Snrnp40">
    <property type="organism name" value="mouse"/>
</dbReference>
<dbReference type="PRO" id="PR:Q6PE01"/>
<dbReference type="Proteomes" id="UP000000589">
    <property type="component" value="Chromosome 4"/>
</dbReference>
<dbReference type="RNAct" id="Q6PE01">
    <property type="molecule type" value="protein"/>
</dbReference>
<dbReference type="Bgee" id="ENSMUSG00000074088">
    <property type="expression patterns" value="Expressed in hindlimb bud and 70 other cell types or tissues"/>
</dbReference>
<dbReference type="GO" id="GO:0005829">
    <property type="term" value="C:cytosol"/>
    <property type="evidence" value="ECO:0007669"/>
    <property type="project" value="Ensembl"/>
</dbReference>
<dbReference type="GO" id="GO:0016607">
    <property type="term" value="C:nuclear speck"/>
    <property type="evidence" value="ECO:0007669"/>
    <property type="project" value="Ensembl"/>
</dbReference>
<dbReference type="GO" id="GO:0071007">
    <property type="term" value="C:U2-type catalytic step 2 spliceosome"/>
    <property type="evidence" value="ECO:0007669"/>
    <property type="project" value="Ensembl"/>
</dbReference>
<dbReference type="GO" id="GO:0046540">
    <property type="term" value="C:U4/U6 x U5 tri-snRNP complex"/>
    <property type="evidence" value="ECO:0007669"/>
    <property type="project" value="Ensembl"/>
</dbReference>
<dbReference type="GO" id="GO:0006397">
    <property type="term" value="P:mRNA processing"/>
    <property type="evidence" value="ECO:0007669"/>
    <property type="project" value="UniProtKB-KW"/>
</dbReference>
<dbReference type="GO" id="GO:0008380">
    <property type="term" value="P:RNA splicing"/>
    <property type="evidence" value="ECO:0007669"/>
    <property type="project" value="UniProtKB-KW"/>
</dbReference>
<dbReference type="CDD" id="cd00200">
    <property type="entry name" value="WD40"/>
    <property type="match status" value="1"/>
</dbReference>
<dbReference type="FunFam" id="2.130.10.10:FF:000229">
    <property type="entry name" value="Small nuclear ribonucleoprotein U5 subunit 40"/>
    <property type="match status" value="1"/>
</dbReference>
<dbReference type="Gene3D" id="2.130.10.10">
    <property type="entry name" value="YVTN repeat-like/Quinoprotein amine dehydrogenase"/>
    <property type="match status" value="1"/>
</dbReference>
<dbReference type="InterPro" id="IPR020472">
    <property type="entry name" value="G-protein_beta_WD-40_rep"/>
</dbReference>
<dbReference type="InterPro" id="IPR052234">
    <property type="entry name" value="U5_snRNP_Component"/>
</dbReference>
<dbReference type="InterPro" id="IPR015943">
    <property type="entry name" value="WD40/YVTN_repeat-like_dom_sf"/>
</dbReference>
<dbReference type="InterPro" id="IPR019775">
    <property type="entry name" value="WD40_repeat_CS"/>
</dbReference>
<dbReference type="InterPro" id="IPR036322">
    <property type="entry name" value="WD40_repeat_dom_sf"/>
</dbReference>
<dbReference type="InterPro" id="IPR001680">
    <property type="entry name" value="WD40_rpt"/>
</dbReference>
<dbReference type="PANTHER" id="PTHR44006">
    <property type="entry name" value="U5 SMALL NUCLEAR RIBONUCLEOPROTEIN 40 KDA PROTEIN"/>
    <property type="match status" value="1"/>
</dbReference>
<dbReference type="PANTHER" id="PTHR44006:SF1">
    <property type="entry name" value="U5 SMALL NUCLEAR RIBONUCLEOPROTEIN 40 KDA PROTEIN"/>
    <property type="match status" value="1"/>
</dbReference>
<dbReference type="Pfam" id="PF00400">
    <property type="entry name" value="WD40"/>
    <property type="match status" value="7"/>
</dbReference>
<dbReference type="PRINTS" id="PR00320">
    <property type="entry name" value="GPROTEINBRPT"/>
</dbReference>
<dbReference type="SMART" id="SM00320">
    <property type="entry name" value="WD40"/>
    <property type="match status" value="7"/>
</dbReference>
<dbReference type="SUPFAM" id="SSF50978">
    <property type="entry name" value="WD40 repeat-like"/>
    <property type="match status" value="1"/>
</dbReference>
<dbReference type="PROSITE" id="PS00678">
    <property type="entry name" value="WD_REPEATS_1"/>
    <property type="match status" value="5"/>
</dbReference>
<dbReference type="PROSITE" id="PS50082">
    <property type="entry name" value="WD_REPEATS_2"/>
    <property type="match status" value="7"/>
</dbReference>
<dbReference type="PROSITE" id="PS50294">
    <property type="entry name" value="WD_REPEATS_REGION"/>
    <property type="match status" value="1"/>
</dbReference>
<feature type="chain" id="PRO_0000051418" description="U5 small nuclear ribonucleoprotein 40 kDa protein">
    <location>
        <begin position="1"/>
        <end position="358"/>
    </location>
</feature>
<feature type="repeat" description="WD 1">
    <location>
        <begin position="65"/>
        <end position="104"/>
    </location>
</feature>
<feature type="repeat" description="WD 2">
    <location>
        <begin position="108"/>
        <end position="147"/>
    </location>
</feature>
<feature type="repeat" description="WD 3">
    <location>
        <begin position="150"/>
        <end position="190"/>
    </location>
</feature>
<feature type="repeat" description="WD 4">
    <location>
        <begin position="192"/>
        <end position="231"/>
    </location>
</feature>
<feature type="repeat" description="WD 5">
    <location>
        <begin position="234"/>
        <end position="273"/>
    </location>
</feature>
<feature type="repeat" description="WD 6">
    <location>
        <begin position="284"/>
        <end position="323"/>
    </location>
</feature>
<feature type="repeat" description="WD 7">
    <location>
        <begin position="326"/>
        <end position="358"/>
    </location>
</feature>
<feature type="modified residue" description="Asymmetric dimethylarginine" evidence="3">
    <location>
        <position position="21"/>
    </location>
</feature>
<feature type="cross-link" description="Glycyl lysine isopeptide (Lys-Gly) (interchain with G-Cter in SUMO2)" evidence="1">
    <location>
        <position position="18"/>
    </location>
</feature>
<feature type="cross-link" description="Glycyl lysine isopeptide (Lys-Gly) (interchain with G-Cter in SUMO2)" evidence="1">
    <location>
        <position position="271"/>
    </location>
</feature>
<feature type="sequence conflict" description="In Ref. 1; BAB22049." evidence="2" ref="1">
    <original>K</original>
    <variation>R</variation>
    <location>
        <position position="185"/>
    </location>
</feature>
<feature type="sequence conflict" description="In Ref. 1; BAB22049." evidence="2" ref="1">
    <original>G</original>
    <variation>D</variation>
    <location>
        <position position="241"/>
    </location>
</feature>
<accession>Q6PE01</accession>
<accession>Q3TEJ3</accession>
<accession>Q9DCX3</accession>
<comment type="function">
    <text evidence="1">Required for pre-mRNA splicing as component of the activated spliceosome. Component of the U5 small nuclear ribonucleoprotein (snRNP) complex and the U4/U6-U5 tri-snRNP complex, building blocks of the spliceosome. As a component of the minor spliceosome, involved in the splicing of U12-type introns in pre-mRNAs (By similarity).</text>
</comment>
<comment type="subunit">
    <text evidence="1">Component of the pre-catalytic and catalytic spliceosome complexes. Component of the postcatalytic spliceosome P complex. Part of the U5 snRNP complex. Interacts with PRPF8. Component of the U4/U6-U5 tri-snRNP complex composed of the U4, U6 and U5 snRNAs and at least PRPF3, PRPF4, PRPF6, PRPF8, PRPF31, SNRNP200, TXNL4A, WDR57, SNRNP40, DDX23, CD2BP2, PPIH, SNU13, EFTUD2, SART1 and USP39. Component of the minor spliceosome, which splices U12-type introns (By similarity).</text>
</comment>
<comment type="subcellular location">
    <subcellularLocation>
        <location evidence="1">Nucleus</location>
    </subcellularLocation>
</comment>
<comment type="sequence caution" evidence="2">
    <conflict type="frameshift">
        <sequence resource="EMBL-CDS" id="BAB22049"/>
    </conflict>
</comment>
<organism>
    <name type="scientific">Mus musculus</name>
    <name type="common">Mouse</name>
    <dbReference type="NCBI Taxonomy" id="10090"/>
    <lineage>
        <taxon>Eukaryota</taxon>
        <taxon>Metazoa</taxon>
        <taxon>Chordata</taxon>
        <taxon>Craniata</taxon>
        <taxon>Vertebrata</taxon>
        <taxon>Euteleostomi</taxon>
        <taxon>Mammalia</taxon>
        <taxon>Eutheria</taxon>
        <taxon>Euarchontoglires</taxon>
        <taxon>Glires</taxon>
        <taxon>Rodentia</taxon>
        <taxon>Myomorpha</taxon>
        <taxon>Muroidea</taxon>
        <taxon>Muridae</taxon>
        <taxon>Murinae</taxon>
        <taxon>Mus</taxon>
        <taxon>Mus</taxon>
    </lineage>
</organism>